<comment type="function">
    <text evidence="1">An essential GTPase which binds GTP, GDP and possibly (p)ppGpp with moderate affinity, with high nucleotide exchange rates and a fairly low GTP hydrolysis rate. Plays a role in control of the cell cycle, stress response, ribosome biogenesis and in those bacteria that undergo differentiation, in morphogenesis control.</text>
</comment>
<comment type="cofactor">
    <cofactor evidence="1">
        <name>Mg(2+)</name>
        <dbReference type="ChEBI" id="CHEBI:18420"/>
    </cofactor>
</comment>
<comment type="subunit">
    <text evidence="1">Monomer.</text>
</comment>
<comment type="subcellular location">
    <subcellularLocation>
        <location evidence="1">Cytoplasm</location>
    </subcellularLocation>
</comment>
<comment type="similarity">
    <text evidence="1">Belongs to the TRAFAC class OBG-HflX-like GTPase superfamily. OBG GTPase family.</text>
</comment>
<keyword id="KW-0963">Cytoplasm</keyword>
<keyword id="KW-0342">GTP-binding</keyword>
<keyword id="KW-0378">Hydrolase</keyword>
<keyword id="KW-0460">Magnesium</keyword>
<keyword id="KW-0479">Metal-binding</keyword>
<keyword id="KW-0547">Nucleotide-binding</keyword>
<dbReference type="EC" id="3.6.5.-" evidence="1"/>
<dbReference type="EMBL" id="CP000886">
    <property type="protein sequence ID" value="ABX69442.1"/>
    <property type="molecule type" value="Genomic_DNA"/>
</dbReference>
<dbReference type="SMR" id="A9N750"/>
<dbReference type="KEGG" id="spq:SPAB_04118"/>
<dbReference type="PATRIC" id="fig|1016998.12.peg.3878"/>
<dbReference type="HOGENOM" id="CLU_011747_2_0_6"/>
<dbReference type="BioCyc" id="SENT1016998:SPAB_RS16730-MONOMER"/>
<dbReference type="Proteomes" id="UP000008556">
    <property type="component" value="Chromosome"/>
</dbReference>
<dbReference type="GO" id="GO:0005737">
    <property type="term" value="C:cytoplasm"/>
    <property type="evidence" value="ECO:0007669"/>
    <property type="project" value="UniProtKB-SubCell"/>
</dbReference>
<dbReference type="GO" id="GO:0005525">
    <property type="term" value="F:GTP binding"/>
    <property type="evidence" value="ECO:0007669"/>
    <property type="project" value="UniProtKB-UniRule"/>
</dbReference>
<dbReference type="GO" id="GO:0003924">
    <property type="term" value="F:GTPase activity"/>
    <property type="evidence" value="ECO:0007669"/>
    <property type="project" value="UniProtKB-UniRule"/>
</dbReference>
<dbReference type="GO" id="GO:0000287">
    <property type="term" value="F:magnesium ion binding"/>
    <property type="evidence" value="ECO:0007669"/>
    <property type="project" value="InterPro"/>
</dbReference>
<dbReference type="GO" id="GO:0042254">
    <property type="term" value="P:ribosome biogenesis"/>
    <property type="evidence" value="ECO:0007669"/>
    <property type="project" value="UniProtKB-UniRule"/>
</dbReference>
<dbReference type="CDD" id="cd01898">
    <property type="entry name" value="Obg"/>
    <property type="match status" value="1"/>
</dbReference>
<dbReference type="FunFam" id="2.70.210.12:FF:000001">
    <property type="entry name" value="GTPase Obg"/>
    <property type="match status" value="1"/>
</dbReference>
<dbReference type="FunFam" id="3.40.50.300:FF:000185">
    <property type="entry name" value="GTPase Obg"/>
    <property type="match status" value="1"/>
</dbReference>
<dbReference type="Gene3D" id="2.70.210.12">
    <property type="entry name" value="GTP1/OBG domain"/>
    <property type="match status" value="1"/>
</dbReference>
<dbReference type="Gene3D" id="3.40.50.300">
    <property type="entry name" value="P-loop containing nucleotide triphosphate hydrolases"/>
    <property type="match status" value="1"/>
</dbReference>
<dbReference type="HAMAP" id="MF_01454">
    <property type="entry name" value="GTPase_Obg"/>
    <property type="match status" value="1"/>
</dbReference>
<dbReference type="InterPro" id="IPR031167">
    <property type="entry name" value="G_OBG"/>
</dbReference>
<dbReference type="InterPro" id="IPR006073">
    <property type="entry name" value="GTP-bd"/>
</dbReference>
<dbReference type="InterPro" id="IPR014100">
    <property type="entry name" value="GTP-bd_Obg/CgtA"/>
</dbReference>
<dbReference type="InterPro" id="IPR006074">
    <property type="entry name" value="GTP1-OBG_CS"/>
</dbReference>
<dbReference type="InterPro" id="IPR006169">
    <property type="entry name" value="GTP1_OBG_dom"/>
</dbReference>
<dbReference type="InterPro" id="IPR036726">
    <property type="entry name" value="GTP1_OBG_dom_sf"/>
</dbReference>
<dbReference type="InterPro" id="IPR045086">
    <property type="entry name" value="OBG_GTPase"/>
</dbReference>
<dbReference type="InterPro" id="IPR027417">
    <property type="entry name" value="P-loop_NTPase"/>
</dbReference>
<dbReference type="NCBIfam" id="TIGR02729">
    <property type="entry name" value="Obg_CgtA"/>
    <property type="match status" value="1"/>
</dbReference>
<dbReference type="NCBIfam" id="NF008955">
    <property type="entry name" value="PRK12297.1"/>
    <property type="match status" value="1"/>
</dbReference>
<dbReference type="NCBIfam" id="NF008956">
    <property type="entry name" value="PRK12299.1"/>
    <property type="match status" value="1"/>
</dbReference>
<dbReference type="PANTHER" id="PTHR11702">
    <property type="entry name" value="DEVELOPMENTALLY REGULATED GTP-BINDING PROTEIN-RELATED"/>
    <property type="match status" value="1"/>
</dbReference>
<dbReference type="PANTHER" id="PTHR11702:SF31">
    <property type="entry name" value="MITOCHONDRIAL RIBOSOME-ASSOCIATED GTPASE 2"/>
    <property type="match status" value="1"/>
</dbReference>
<dbReference type="Pfam" id="PF01018">
    <property type="entry name" value="GTP1_OBG"/>
    <property type="match status" value="1"/>
</dbReference>
<dbReference type="Pfam" id="PF01926">
    <property type="entry name" value="MMR_HSR1"/>
    <property type="match status" value="1"/>
</dbReference>
<dbReference type="PIRSF" id="PIRSF002401">
    <property type="entry name" value="GTP_bd_Obg/CgtA"/>
    <property type="match status" value="1"/>
</dbReference>
<dbReference type="PRINTS" id="PR00326">
    <property type="entry name" value="GTP1OBG"/>
</dbReference>
<dbReference type="SUPFAM" id="SSF82051">
    <property type="entry name" value="Obg GTP-binding protein N-terminal domain"/>
    <property type="match status" value="1"/>
</dbReference>
<dbReference type="SUPFAM" id="SSF52540">
    <property type="entry name" value="P-loop containing nucleoside triphosphate hydrolases"/>
    <property type="match status" value="1"/>
</dbReference>
<dbReference type="PROSITE" id="PS51710">
    <property type="entry name" value="G_OBG"/>
    <property type="match status" value="1"/>
</dbReference>
<dbReference type="PROSITE" id="PS00905">
    <property type="entry name" value="GTP1_OBG"/>
    <property type="match status" value="1"/>
</dbReference>
<dbReference type="PROSITE" id="PS51883">
    <property type="entry name" value="OBG"/>
    <property type="match status" value="1"/>
</dbReference>
<sequence length="390" mass="43104">MKFVDEASILVVAGDGGNGCVSFRREKYIPKGGPDGGDGGDGGDVWMEADENLNTLIDYRFEKSFRAERGQNGASRDCTGKRGKDVTIKVPVGTRVIDQGTGETMGDMTKHGQRLLVAKGGWHGLGNTRFKSSVNRTPRQKTNGTPGDKRDLLLELMLLADVGMLGMPNAGKSTFIRAVSAAKPKVADYPFTTLVPSLGVVRMDSEKSFVVADIPGLIEGAAEGAGLGIRFLKHLERCRVLLHLIDIDPIDGSDPVENARIIIGELEKYSQDLAAKPRWLVFNKIDLMDKTEAEEKAKAIAEALGWEGKYYLISAASQLGVKDLCWDVMTFIIENPIAQAEEAKQPEKVEFMWDDYHRQQLAEVEEDADDDWDDDWDEDDEEGVEFIYKR</sequence>
<protein>
    <recommendedName>
        <fullName evidence="1">GTPase Obg</fullName>
        <ecNumber evidence="1">3.6.5.-</ecNumber>
    </recommendedName>
    <alternativeName>
        <fullName evidence="1">GTP-binding protein Obg</fullName>
    </alternativeName>
</protein>
<feature type="chain" id="PRO_0000386229" description="GTPase Obg">
    <location>
        <begin position="1"/>
        <end position="390"/>
    </location>
</feature>
<feature type="domain" description="Obg" evidence="2">
    <location>
        <begin position="1"/>
        <end position="159"/>
    </location>
</feature>
<feature type="domain" description="OBG-type G" evidence="1">
    <location>
        <begin position="160"/>
        <end position="333"/>
    </location>
</feature>
<feature type="region of interest" description="Disordered" evidence="3">
    <location>
        <begin position="127"/>
        <end position="147"/>
    </location>
</feature>
<feature type="compositionally biased region" description="Polar residues" evidence="3">
    <location>
        <begin position="129"/>
        <end position="145"/>
    </location>
</feature>
<feature type="binding site" evidence="1">
    <location>
        <begin position="166"/>
        <end position="173"/>
    </location>
    <ligand>
        <name>GTP</name>
        <dbReference type="ChEBI" id="CHEBI:37565"/>
    </ligand>
</feature>
<feature type="binding site" evidence="1">
    <location>
        <position position="173"/>
    </location>
    <ligand>
        <name>Mg(2+)</name>
        <dbReference type="ChEBI" id="CHEBI:18420"/>
    </ligand>
</feature>
<feature type="binding site" evidence="1">
    <location>
        <begin position="191"/>
        <end position="195"/>
    </location>
    <ligand>
        <name>GTP</name>
        <dbReference type="ChEBI" id="CHEBI:37565"/>
    </ligand>
</feature>
<feature type="binding site" evidence="1">
    <location>
        <position position="193"/>
    </location>
    <ligand>
        <name>Mg(2+)</name>
        <dbReference type="ChEBI" id="CHEBI:18420"/>
    </ligand>
</feature>
<feature type="binding site" evidence="1">
    <location>
        <begin position="213"/>
        <end position="216"/>
    </location>
    <ligand>
        <name>GTP</name>
        <dbReference type="ChEBI" id="CHEBI:37565"/>
    </ligand>
</feature>
<feature type="binding site" evidence="1">
    <location>
        <begin position="283"/>
        <end position="286"/>
    </location>
    <ligand>
        <name>GTP</name>
        <dbReference type="ChEBI" id="CHEBI:37565"/>
    </ligand>
</feature>
<feature type="binding site" evidence="1">
    <location>
        <begin position="314"/>
        <end position="316"/>
    </location>
    <ligand>
        <name>GTP</name>
        <dbReference type="ChEBI" id="CHEBI:37565"/>
    </ligand>
</feature>
<evidence type="ECO:0000255" key="1">
    <source>
        <dbReference type="HAMAP-Rule" id="MF_01454"/>
    </source>
</evidence>
<evidence type="ECO:0000255" key="2">
    <source>
        <dbReference type="PROSITE-ProRule" id="PRU01231"/>
    </source>
</evidence>
<evidence type="ECO:0000256" key="3">
    <source>
        <dbReference type="SAM" id="MobiDB-lite"/>
    </source>
</evidence>
<proteinExistence type="inferred from homology"/>
<organism>
    <name type="scientific">Salmonella paratyphi B (strain ATCC BAA-1250 / SPB7)</name>
    <dbReference type="NCBI Taxonomy" id="1016998"/>
    <lineage>
        <taxon>Bacteria</taxon>
        <taxon>Pseudomonadati</taxon>
        <taxon>Pseudomonadota</taxon>
        <taxon>Gammaproteobacteria</taxon>
        <taxon>Enterobacterales</taxon>
        <taxon>Enterobacteriaceae</taxon>
        <taxon>Salmonella</taxon>
    </lineage>
</organism>
<reference key="1">
    <citation type="submission" date="2007-11" db="EMBL/GenBank/DDBJ databases">
        <authorList>
            <consortium name="The Salmonella enterica serovar Paratyphi B Genome Sequencing Project"/>
            <person name="McClelland M."/>
            <person name="Sanderson E.K."/>
            <person name="Porwollik S."/>
            <person name="Spieth J."/>
            <person name="Clifton W.S."/>
            <person name="Fulton R."/>
            <person name="Cordes M."/>
            <person name="Wollam A."/>
            <person name="Shah N."/>
            <person name="Pepin K."/>
            <person name="Bhonagiri V."/>
            <person name="Nash W."/>
            <person name="Johnson M."/>
            <person name="Thiruvilangam P."/>
            <person name="Wilson R."/>
        </authorList>
    </citation>
    <scope>NUCLEOTIDE SEQUENCE [LARGE SCALE GENOMIC DNA]</scope>
    <source>
        <strain>ATCC BAA-1250 / SPB7</strain>
    </source>
</reference>
<name>OBG_SALPB</name>
<accession>A9N750</accession>
<gene>
    <name evidence="1" type="primary">obg</name>
    <name type="ordered locus">SPAB_04118</name>
</gene>